<reference key="1">
    <citation type="journal article" date="1984" name="Virus Res.">
        <title>Sequence of the membrane protein gene from avian coronavirus IBV.</title>
        <authorList>
            <person name="Boursnell M.E.G."/>
            <person name="Brown T.D.K."/>
            <person name="Binns M.M."/>
        </authorList>
    </citation>
    <scope>NUCLEOTIDE SEQUENCE [GENOMIC RNA]</scope>
</reference>
<reference key="2">
    <citation type="journal article" date="1987" name="J. Gen. Virol.">
        <title>Completion of the sequence of the genome of the coronavirus avian infectious bronchitis virus.</title>
        <authorList>
            <person name="Boursnell M.E.G."/>
            <person name="Brown T.D.K."/>
            <person name="Foulds I.J."/>
            <person name="Green P.F."/>
            <person name="Tomley F.M."/>
            <person name="Binns M.M."/>
        </authorList>
    </citation>
    <scope>NUCLEOTIDE SEQUENCE [GENOMIC RNA]</scope>
</reference>
<reference key="3">
    <citation type="journal article" date="2005" name="Biochem. Biophys. Res. Commun.">
        <title>Selection of and recombination between minor variants lead to the adaptation of an avian coronavirus to primate cells.</title>
        <authorList>
            <person name="Fang S.G."/>
            <person name="Shen S."/>
            <person name="Tay F.P."/>
            <person name="Liu D.X."/>
        </authorList>
    </citation>
    <scope>NUCLEOTIDE SEQUENCE [GENOMIC RNA]</scope>
    <source>
        <strain>Isolate IBV-EP3</strain>
        <strain>Isolate Vero cell-adapted p65</strain>
    </source>
</reference>
<dbReference type="EMBL" id="M95169">
    <property type="protein sequence ID" value="AAA70239.1"/>
    <property type="molecule type" value="Genomic_RNA"/>
</dbReference>
<dbReference type="EMBL" id="M22014">
    <property type="protein sequence ID" value="AAA46215.1"/>
    <property type="molecule type" value="Genomic_RNA"/>
</dbReference>
<dbReference type="EMBL" id="DQ001338">
    <property type="protein sequence ID" value="AAY24427.1"/>
    <property type="molecule type" value="Genomic_RNA"/>
</dbReference>
<dbReference type="EMBL" id="DQ001339">
    <property type="protein sequence ID" value="AAY24437.1"/>
    <property type="molecule type" value="Genomic_RNA"/>
</dbReference>
<dbReference type="PIR" id="A04022">
    <property type="entry name" value="MMIHIV"/>
</dbReference>
<dbReference type="RefSeq" id="NP_040835.1">
    <property type="nucleotide sequence ID" value="NC_001451.1"/>
</dbReference>
<dbReference type="SMR" id="P69601"/>
<dbReference type="GeneID" id="1489743"/>
<dbReference type="KEGG" id="vg:1489743"/>
<dbReference type="Proteomes" id="UP000006717">
    <property type="component" value="Segment"/>
</dbReference>
<dbReference type="Proteomes" id="UP000180341">
    <property type="component" value="Genome"/>
</dbReference>
<dbReference type="Proteomes" id="UP000180342">
    <property type="component" value="Genome"/>
</dbReference>
<dbReference type="GO" id="GO:0044178">
    <property type="term" value="C:host cell Golgi membrane"/>
    <property type="evidence" value="ECO:0007669"/>
    <property type="project" value="UniProtKB-SubCell"/>
</dbReference>
<dbReference type="GO" id="GO:0016020">
    <property type="term" value="C:membrane"/>
    <property type="evidence" value="ECO:0007669"/>
    <property type="project" value="UniProtKB-UniRule"/>
</dbReference>
<dbReference type="GO" id="GO:0019031">
    <property type="term" value="C:viral envelope"/>
    <property type="evidence" value="ECO:0007669"/>
    <property type="project" value="UniProtKB-UniRule"/>
</dbReference>
<dbReference type="GO" id="GO:0055036">
    <property type="term" value="C:virion membrane"/>
    <property type="evidence" value="ECO:0007669"/>
    <property type="project" value="UniProtKB-SubCell"/>
</dbReference>
<dbReference type="GO" id="GO:0039660">
    <property type="term" value="F:structural constituent of virion"/>
    <property type="evidence" value="ECO:0007669"/>
    <property type="project" value="UniProtKB-UniRule"/>
</dbReference>
<dbReference type="CDD" id="cd21566">
    <property type="entry name" value="gammaCoV_M"/>
    <property type="match status" value="1"/>
</dbReference>
<dbReference type="HAMAP" id="MF_04203">
    <property type="entry name" value="GAMMA_CORONA_M"/>
    <property type="match status" value="1"/>
</dbReference>
<dbReference type="InterPro" id="IPR042550">
    <property type="entry name" value="GAMMA_CORONA_M"/>
</dbReference>
<dbReference type="InterPro" id="IPR002574">
    <property type="entry name" value="M_CoV"/>
</dbReference>
<dbReference type="Pfam" id="PF01635">
    <property type="entry name" value="CoV_M"/>
    <property type="match status" value="1"/>
</dbReference>
<dbReference type="PROSITE" id="PS51927">
    <property type="entry name" value="COV_M"/>
    <property type="match status" value="1"/>
</dbReference>
<organism>
    <name type="scientific">Avian infectious bronchitis virus (strain Beaudette)</name>
    <name type="common">IBV</name>
    <dbReference type="NCBI Taxonomy" id="11122"/>
    <lineage>
        <taxon>Viruses</taxon>
        <taxon>Riboviria</taxon>
        <taxon>Orthornavirae</taxon>
        <taxon>Pisuviricota</taxon>
        <taxon>Pisoniviricetes</taxon>
        <taxon>Nidovirales</taxon>
        <taxon>Cornidovirineae</taxon>
        <taxon>Coronaviridae</taxon>
        <taxon>Orthocoronavirinae</taxon>
        <taxon>Gammacoronavirus</taxon>
        <taxon>Igacovirus</taxon>
        <taxon>Avian coronavirus</taxon>
    </lineage>
</organism>
<protein>
    <recommendedName>
        <fullName evidence="1">Membrane protein</fullName>
        <shortName evidence="1">M protein</shortName>
    </recommendedName>
    <alternativeName>
        <fullName evidence="1">E1 glycoprotein</fullName>
    </alternativeName>
    <alternativeName>
        <fullName evidence="1">Matrix glycoprotein</fullName>
    </alternativeName>
    <alternativeName>
        <fullName evidence="1">Membrane glycoprotein</fullName>
    </alternativeName>
</protein>
<evidence type="ECO:0000255" key="1">
    <source>
        <dbReference type="HAMAP-Rule" id="MF_04203"/>
    </source>
</evidence>
<evidence type="ECO:0000255" key="2">
    <source>
        <dbReference type="PROSITE-ProRule" id="PRU01275"/>
    </source>
</evidence>
<proteinExistence type="inferred from homology"/>
<gene>
    <name evidence="1" type="primary">M</name>
</gene>
<comment type="function">
    <text evidence="1 2">Component of the viral envelope that plays a central role in virus morphogenesis and assembly via its interactions with other viral proteins.</text>
</comment>
<comment type="subunit">
    <text evidence="1 2">Homomultimer. Interacts with envelope E protein in the budding compartment of the host cell, which is located between endoplasmic reticulum and the Golgi complex. Forms a complex with HE and S proteins. Interacts with nucleocapsid N protein. This interaction probably participates in RNA packaging into the virus.</text>
</comment>
<comment type="subcellular location">
    <subcellularLocation>
        <location evidence="1">Virion membrane</location>
        <topology evidence="1">Multi-pass membrane protein</topology>
    </subcellularLocation>
    <subcellularLocation>
        <location evidence="1">Host Golgi apparatus membrane</location>
        <topology evidence="1">Multi-pass membrane protein</topology>
    </subcellularLocation>
    <text evidence="1">Largely embedded in the lipid bilayer.</text>
</comment>
<comment type="similarity">
    <text evidence="1">Belongs to the gammacoronaviruses M protein family.</text>
</comment>
<accession>P69601</accession>
<accession>P04327</accession>
<accession>Q4ZJS7</accession>
<feature type="chain" id="PRO_0000106047" description="Membrane protein">
    <location>
        <begin position="1"/>
        <end position="225"/>
    </location>
</feature>
<feature type="topological domain" description="Virion surface" evidence="1">
    <location>
        <begin position="1"/>
        <end position="20"/>
    </location>
</feature>
<feature type="transmembrane region" description="Helical" evidence="1">
    <location>
        <begin position="21"/>
        <end position="41"/>
    </location>
</feature>
<feature type="topological domain" description="Intravirion" evidence="1">
    <location>
        <begin position="42"/>
        <end position="51"/>
    </location>
</feature>
<feature type="transmembrane region" description="Helical" evidence="1">
    <location>
        <begin position="52"/>
        <end position="72"/>
    </location>
</feature>
<feature type="topological domain" description="Virion surface" evidence="1">
    <location>
        <begin position="73"/>
        <end position="77"/>
    </location>
</feature>
<feature type="transmembrane region" description="Helical" evidence="1">
    <location>
        <begin position="78"/>
        <end position="98"/>
    </location>
</feature>
<feature type="topological domain" description="Intravirion" evidence="1">
    <location>
        <begin position="99"/>
        <end position="225"/>
    </location>
</feature>
<feature type="sequence variant" description="In strain: Isolate IBV-EP3 and Isolate Vero cell-adapted p65.">
    <original>P</original>
    <variation>S</variation>
    <location>
        <position position="2"/>
    </location>
</feature>
<feature type="sequence variant" description="In strain: Isolate IBV-EP3 and Isolate Vero cell-adapted p65.">
    <original>T</original>
    <variation>I</variation>
    <location>
        <position position="71"/>
    </location>
</feature>
<name>VME1_IBVB</name>
<keyword id="KW-0325">Glycoprotein</keyword>
<keyword id="KW-1040">Host Golgi apparatus</keyword>
<keyword id="KW-1043">Host membrane</keyword>
<keyword id="KW-0472">Membrane</keyword>
<keyword id="KW-1185">Reference proteome</keyword>
<keyword id="KW-0812">Transmembrane</keyword>
<keyword id="KW-1133">Transmembrane helix</keyword>
<keyword id="KW-0261">Viral envelope protein</keyword>
<keyword id="KW-0468">Viral matrix protein</keyword>
<keyword id="KW-0946">Virion</keyword>
<organismHost>
    <name type="scientific">Gallus gallus</name>
    <name type="common">Chicken</name>
    <dbReference type="NCBI Taxonomy" id="9031"/>
</organismHost>
<sequence>MPNETNCTLDFEQSVQLFKEYNLFITAFLLFLTIILQYGYATRSKVIYTLKMIVLWCFWPLNIAVGVISCTYPPNTGGLVAAIILTVFACLSFVGYWIQSIRLFKRCRSWWSFNPESNAVGSILLTNGQQCNFAIESVPMVLSPIIKNGVLYCEGQWLAKCEPDHLPKDIFVCTPDRRNIYRMVQKYTGDQSGNKKRFATFVYAKQSVDTGELESVATGGSSLYT</sequence>